<keyword id="KW-0963">Cytoplasm</keyword>
<keyword id="KW-0274">FAD</keyword>
<keyword id="KW-0285">Flavoprotein</keyword>
<keyword id="KW-0489">Methyltransferase</keyword>
<keyword id="KW-0511">Multifunctional enzyme</keyword>
<keyword id="KW-0560">Oxidoreductase</keyword>
<keyword id="KW-1185">Reference proteome</keyword>
<keyword id="KW-0949">S-adenosyl-L-methionine</keyword>
<keyword id="KW-0808">Transferase</keyword>
<keyword id="KW-0819">tRNA processing</keyword>
<reference key="1">
    <citation type="submission" date="2006-12" db="EMBL/GenBank/DDBJ databases">
        <title>Complete sequence of Shewanella amazonensis SB2B.</title>
        <authorList>
            <consortium name="US DOE Joint Genome Institute"/>
            <person name="Copeland A."/>
            <person name="Lucas S."/>
            <person name="Lapidus A."/>
            <person name="Barry K."/>
            <person name="Detter J.C."/>
            <person name="Glavina del Rio T."/>
            <person name="Hammon N."/>
            <person name="Israni S."/>
            <person name="Dalin E."/>
            <person name="Tice H."/>
            <person name="Pitluck S."/>
            <person name="Munk A.C."/>
            <person name="Brettin T."/>
            <person name="Bruce D."/>
            <person name="Han C."/>
            <person name="Tapia R."/>
            <person name="Gilna P."/>
            <person name="Schmutz J."/>
            <person name="Larimer F."/>
            <person name="Land M."/>
            <person name="Hauser L."/>
            <person name="Kyrpides N."/>
            <person name="Mikhailova N."/>
            <person name="Fredrickson J."/>
            <person name="Richardson P."/>
        </authorList>
    </citation>
    <scope>NUCLEOTIDE SEQUENCE [LARGE SCALE GENOMIC DNA]</scope>
    <source>
        <strain>ATCC BAA-1098 / SB2B</strain>
    </source>
</reference>
<comment type="function">
    <text evidence="1">Catalyzes the last two steps in the biosynthesis of 5-methylaminomethyl-2-thiouridine (mnm(5)s(2)U) at the wobble position (U34) in tRNA. Catalyzes the FAD-dependent demodification of cmnm(5)s(2)U34 to nm(5)s(2)U34, followed by the transfer of a methyl group from S-adenosyl-L-methionine to nm(5)s(2)U34, to form mnm(5)s(2)U34.</text>
</comment>
<comment type="catalytic activity">
    <reaction evidence="1">
        <text>5-aminomethyl-2-thiouridine(34) in tRNA + S-adenosyl-L-methionine = 5-methylaminomethyl-2-thiouridine(34) in tRNA + S-adenosyl-L-homocysteine + H(+)</text>
        <dbReference type="Rhea" id="RHEA:19569"/>
        <dbReference type="Rhea" id="RHEA-COMP:10195"/>
        <dbReference type="Rhea" id="RHEA-COMP:10197"/>
        <dbReference type="ChEBI" id="CHEBI:15378"/>
        <dbReference type="ChEBI" id="CHEBI:57856"/>
        <dbReference type="ChEBI" id="CHEBI:59789"/>
        <dbReference type="ChEBI" id="CHEBI:74454"/>
        <dbReference type="ChEBI" id="CHEBI:74455"/>
        <dbReference type="EC" id="2.1.1.61"/>
    </reaction>
</comment>
<comment type="cofactor">
    <cofactor evidence="1">
        <name>FAD</name>
        <dbReference type="ChEBI" id="CHEBI:57692"/>
    </cofactor>
</comment>
<comment type="subcellular location">
    <subcellularLocation>
        <location evidence="1">Cytoplasm</location>
    </subcellularLocation>
</comment>
<comment type="similarity">
    <text evidence="1">In the N-terminal section; belongs to the methyltransferase superfamily. tRNA (mnm(5)s(2)U34)-methyltransferase family.</text>
</comment>
<comment type="similarity">
    <text evidence="1">In the C-terminal section; belongs to the DAO family.</text>
</comment>
<comment type="sequence caution" evidence="2">
    <conflict type="erroneous initiation">
        <sequence resource="EMBL-CDS" id="ABM00361"/>
    </conflict>
</comment>
<name>MNMC_SHEAM</name>
<feature type="chain" id="PRO_0000348022" description="tRNA 5-methylaminomethyl-2-thiouridine biosynthesis bifunctional protein MnmC">
    <location>
        <begin position="1"/>
        <end position="665"/>
    </location>
</feature>
<feature type="region of interest" description="tRNA (mnm(5)s(2)U34)-methyltransferase">
    <location>
        <begin position="1"/>
        <end position="243"/>
    </location>
</feature>
<feature type="region of interest" description="FAD-dependent cmnm(5)s(2)U34 oxidoreductase">
    <location>
        <begin position="264"/>
        <end position="665"/>
    </location>
</feature>
<proteinExistence type="inferred from homology"/>
<gene>
    <name evidence="1" type="primary">mnmC</name>
    <name type="ordered locus">Sama_2155</name>
</gene>
<dbReference type="EC" id="2.1.1.61" evidence="1"/>
<dbReference type="EC" id="1.5.-.-" evidence="1"/>
<dbReference type="EMBL" id="CP000507">
    <property type="protein sequence ID" value="ABM00361.1"/>
    <property type="status" value="ALT_INIT"/>
    <property type="molecule type" value="Genomic_DNA"/>
</dbReference>
<dbReference type="SMR" id="A1S7K4"/>
<dbReference type="STRING" id="326297.Sama_2155"/>
<dbReference type="KEGG" id="saz:Sama_2155"/>
<dbReference type="eggNOG" id="COG0665">
    <property type="taxonomic scope" value="Bacteria"/>
</dbReference>
<dbReference type="HOGENOM" id="CLU_451910_0_0_6"/>
<dbReference type="Proteomes" id="UP000009175">
    <property type="component" value="Chromosome"/>
</dbReference>
<dbReference type="GO" id="GO:0005737">
    <property type="term" value="C:cytoplasm"/>
    <property type="evidence" value="ECO:0007669"/>
    <property type="project" value="UniProtKB-SubCell"/>
</dbReference>
<dbReference type="GO" id="GO:0050660">
    <property type="term" value="F:flavin adenine dinucleotide binding"/>
    <property type="evidence" value="ECO:0007669"/>
    <property type="project" value="UniProtKB-UniRule"/>
</dbReference>
<dbReference type="GO" id="GO:0016645">
    <property type="term" value="F:oxidoreductase activity, acting on the CH-NH group of donors"/>
    <property type="evidence" value="ECO:0007669"/>
    <property type="project" value="InterPro"/>
</dbReference>
<dbReference type="GO" id="GO:0004808">
    <property type="term" value="F:tRNA (5-methylaminomethyl-2-thiouridylate)(34)-methyltransferase activity"/>
    <property type="evidence" value="ECO:0007669"/>
    <property type="project" value="UniProtKB-EC"/>
</dbReference>
<dbReference type="GO" id="GO:0032259">
    <property type="term" value="P:methylation"/>
    <property type="evidence" value="ECO:0007669"/>
    <property type="project" value="UniProtKB-KW"/>
</dbReference>
<dbReference type="GO" id="GO:0002098">
    <property type="term" value="P:tRNA wobble uridine modification"/>
    <property type="evidence" value="ECO:0007669"/>
    <property type="project" value="TreeGrafter"/>
</dbReference>
<dbReference type="Gene3D" id="3.30.9.10">
    <property type="entry name" value="D-Amino Acid Oxidase, subunit A, domain 2"/>
    <property type="match status" value="1"/>
</dbReference>
<dbReference type="Gene3D" id="3.50.50.60">
    <property type="entry name" value="FAD/NAD(P)-binding domain"/>
    <property type="match status" value="1"/>
</dbReference>
<dbReference type="HAMAP" id="MF_01102">
    <property type="entry name" value="MnmC"/>
    <property type="match status" value="1"/>
</dbReference>
<dbReference type="InterPro" id="IPR006076">
    <property type="entry name" value="FAD-dep_OxRdtase"/>
</dbReference>
<dbReference type="InterPro" id="IPR036188">
    <property type="entry name" value="FAD/NAD-bd_sf"/>
</dbReference>
<dbReference type="InterPro" id="IPR023032">
    <property type="entry name" value="tRNA_MAMT_biosynth_bifunc_MnmC"/>
</dbReference>
<dbReference type="InterPro" id="IPR017610">
    <property type="entry name" value="tRNA_S-uridine_synth_MnmC_C"/>
</dbReference>
<dbReference type="NCBIfam" id="TIGR03197">
    <property type="entry name" value="MnmC_Cterm"/>
    <property type="match status" value="1"/>
</dbReference>
<dbReference type="PANTHER" id="PTHR13847">
    <property type="entry name" value="SARCOSINE DEHYDROGENASE-RELATED"/>
    <property type="match status" value="1"/>
</dbReference>
<dbReference type="PANTHER" id="PTHR13847:SF283">
    <property type="entry name" value="TRNA 5-METHYLAMINOMETHYL-2-THIOURIDINE BIOSYNTHESIS BIFUNCTIONAL PROTEIN MNMC"/>
    <property type="match status" value="1"/>
</dbReference>
<dbReference type="Pfam" id="PF01266">
    <property type="entry name" value="DAO"/>
    <property type="match status" value="1"/>
</dbReference>
<dbReference type="SUPFAM" id="SSF51905">
    <property type="entry name" value="FAD/NAD(P)-binding domain"/>
    <property type="match status" value="1"/>
</dbReference>
<protein>
    <recommendedName>
        <fullName evidence="1">tRNA 5-methylaminomethyl-2-thiouridine biosynthesis bifunctional protein MnmC</fullName>
        <shortName evidence="1">tRNA mnm(5)s(2)U biosynthesis bifunctional protein</shortName>
    </recommendedName>
    <domain>
        <recommendedName>
            <fullName evidence="1">tRNA (mnm(5)s(2)U34)-methyltransferase</fullName>
            <ecNumber evidence="1">2.1.1.61</ecNumber>
        </recommendedName>
    </domain>
    <domain>
        <recommendedName>
            <fullName evidence="1">FAD-dependent cmnm(5)s(2)U34 oxidoreductase</fullName>
            <ecNumber evidence="1">1.5.-.-</ecNumber>
        </recommendedName>
    </domain>
</protein>
<accession>A1S7K4</accession>
<evidence type="ECO:0000255" key="1">
    <source>
        <dbReference type="HAMAP-Rule" id="MF_01102"/>
    </source>
</evidence>
<evidence type="ECO:0000305" key="2"/>
<organism>
    <name type="scientific">Shewanella amazonensis (strain ATCC BAA-1098 / SB2B)</name>
    <dbReference type="NCBI Taxonomy" id="326297"/>
    <lineage>
        <taxon>Bacteria</taxon>
        <taxon>Pseudomonadati</taxon>
        <taxon>Pseudomonadota</taxon>
        <taxon>Gammaproteobacteria</taxon>
        <taxon>Alteromonadales</taxon>
        <taxon>Shewanellaceae</taxon>
        <taxon>Shewanella</taxon>
    </lineage>
</organism>
<sequence>MSDSVTSCLLLPILETMPMPVITTLFMFYYPFRTGSTNFSAPIVSPLALLSGQLSIKGGKIMPISRHRVNFFNPMPEFFAIDMAMPLSLPLPEGPCVVLFEALPEPPLWQWLLAAAQVNSAYPETNAAYASNASITSIQHTSKKPLQIIMLLKDEAELNALAMDASHPLSPFAMAASHIKGGQRFHLDDNCWLDFYLCEPNKAATLATFDKASIDVLICPKGEFEQAALELAHQGSILIGDTKPDMPAALPIKPPFKPRDISIVGAGVAGASLALSLLRRGHKVTLYCADAAPGIGASGNRQGAIYPLLTPEDDHLTRLFVPAFLYAKRFVESLAHHPLPFDFCGVLQTGHDERATERIEKLLSKTWPKQVAVRVDADEANHIAGVAIDKGGIYYPQGGWVSPAKLCEAAIEEAKTMGLECHFDVNITSITRADEGWRLNTQTGEIDAHELVLATGHRITELAQTKSLQLAPFRGQVSHVPTRGKLEQLKTVLCAHGYFTPRDASSGSHCMGASYVRGDTSVEYREQEQQENLHKMQESYPGKDWVEYLDISEGSARAGIRMVSRDHLPMAGAAPDVAAIQTQYQAIGHGPKGAQYWQTHAAPVHPGLYIFSGLGSRGLSSGPLIAECLADSLSGTLPVLDGDVMEALNPNRMWLRKLKKGKALD</sequence>